<sequence>MFIVSLLLLFSVLNVYSNSLDYFKSNFNYLKLSDAKSLPLQDKSTSSGNFVSHKKNNNMSVADNDDSFLYKNIQENKALNLENDLESKSAKDFFRFSAISIGSFPIVLFLSLFFFDVSYYFYSGMNANYVPYPFSNGPSFSKDEIYKKFIVSASIGAIVALTIALLDYFL</sequence>
<evidence type="ECO:0000255" key="1"/>
<evidence type="ECO:0000305" key="2"/>
<comment type="subcellular location">
    <subcellularLocation>
        <location evidence="2">Membrane</location>
        <topology evidence="2">Single-pass membrane protein</topology>
    </subcellularLocation>
</comment>
<protein>
    <recommendedName>
        <fullName>Uncharacterized protein BB_0019</fullName>
    </recommendedName>
</protein>
<keyword id="KW-0472">Membrane</keyword>
<keyword id="KW-1185">Reference proteome</keyword>
<keyword id="KW-0812">Transmembrane</keyword>
<keyword id="KW-1133">Transmembrane helix</keyword>
<organism>
    <name type="scientific">Borreliella burgdorferi (strain ATCC 35210 / DSM 4680 / CIP 102532 / B31)</name>
    <name type="common">Borrelia burgdorferi</name>
    <dbReference type="NCBI Taxonomy" id="224326"/>
    <lineage>
        <taxon>Bacteria</taxon>
        <taxon>Pseudomonadati</taxon>
        <taxon>Spirochaetota</taxon>
        <taxon>Spirochaetia</taxon>
        <taxon>Spirochaetales</taxon>
        <taxon>Borreliaceae</taxon>
        <taxon>Borreliella</taxon>
    </lineage>
</organism>
<gene>
    <name type="ordered locus">BB_0019</name>
</gene>
<dbReference type="EMBL" id="AE000783">
    <property type="protein sequence ID" value="AAC66416.1"/>
    <property type="molecule type" value="Genomic_DNA"/>
</dbReference>
<dbReference type="PIR" id="C70102">
    <property type="entry name" value="C70102"/>
</dbReference>
<dbReference type="RefSeq" id="NP_212153.1">
    <property type="nucleotide sequence ID" value="NC_001318.1"/>
</dbReference>
<dbReference type="RefSeq" id="WP_002658362.1">
    <property type="nucleotide sequence ID" value="NC_001318.1"/>
</dbReference>
<dbReference type="SMR" id="O51051"/>
<dbReference type="STRING" id="224326.BB_0019"/>
<dbReference type="PaxDb" id="224326-BB_0019"/>
<dbReference type="EnsemblBacteria" id="AAC66416">
    <property type="protein sequence ID" value="AAC66416"/>
    <property type="gene ID" value="BB_0019"/>
</dbReference>
<dbReference type="KEGG" id="bbu:BB_0019"/>
<dbReference type="PATRIC" id="fig|224326.49.peg.417"/>
<dbReference type="HOGENOM" id="CLU_1567679_0_0_12"/>
<dbReference type="OrthoDB" id="350605at2"/>
<dbReference type="Proteomes" id="UP000001807">
    <property type="component" value="Chromosome"/>
</dbReference>
<dbReference type="GO" id="GO:0016020">
    <property type="term" value="C:membrane"/>
    <property type="evidence" value="ECO:0007669"/>
    <property type="project" value="UniProtKB-SubCell"/>
</dbReference>
<reference key="1">
    <citation type="journal article" date="1997" name="Nature">
        <title>Genomic sequence of a Lyme disease spirochaete, Borrelia burgdorferi.</title>
        <authorList>
            <person name="Fraser C.M."/>
            <person name="Casjens S."/>
            <person name="Huang W.M."/>
            <person name="Sutton G.G."/>
            <person name="Clayton R.A."/>
            <person name="Lathigra R."/>
            <person name="White O."/>
            <person name="Ketchum K.A."/>
            <person name="Dodson R.J."/>
            <person name="Hickey E.K."/>
            <person name="Gwinn M.L."/>
            <person name="Dougherty B.A."/>
            <person name="Tomb J.-F."/>
            <person name="Fleischmann R.D."/>
            <person name="Richardson D.L."/>
            <person name="Peterson J.D."/>
            <person name="Kerlavage A.R."/>
            <person name="Quackenbush J."/>
            <person name="Salzberg S.L."/>
            <person name="Hanson M."/>
            <person name="van Vugt R."/>
            <person name="Palmer N."/>
            <person name="Adams M.D."/>
            <person name="Gocayne J.D."/>
            <person name="Weidman J.F."/>
            <person name="Utterback T.R."/>
            <person name="Watthey L."/>
            <person name="McDonald L.A."/>
            <person name="Artiach P."/>
            <person name="Bowman C."/>
            <person name="Garland S.A."/>
            <person name="Fujii C."/>
            <person name="Cotton M.D."/>
            <person name="Horst K."/>
            <person name="Roberts K.M."/>
            <person name="Hatch B."/>
            <person name="Smith H.O."/>
            <person name="Venter J.C."/>
        </authorList>
    </citation>
    <scope>NUCLEOTIDE SEQUENCE [LARGE SCALE GENOMIC DNA]</scope>
    <source>
        <strain>ATCC 35210 / DSM 4680 / CIP 102532 / B31</strain>
    </source>
</reference>
<name>Y019_BORBU</name>
<feature type="chain" id="PRO_0000174367" description="Uncharacterized protein BB_0019">
    <location>
        <begin position="1"/>
        <end position="170"/>
    </location>
</feature>
<feature type="transmembrane region" description="Helical" evidence="1">
    <location>
        <begin position="96"/>
        <end position="116"/>
    </location>
</feature>
<accession>O51051</accession>
<proteinExistence type="predicted"/>